<comment type="function">
    <text evidence="1 2">IFN-induced antiviral protein which disrupts intracellular cholesterol homeostasis. Inhibits the entry of viruses to the host cell cytoplasm by preventing viral fusion with cholesterol depleted endosomes. May inactivate new enveloped viruses which buds out of the infected cell, by letting them go out with a cholesterol depleted membrane. Active against multiple viruses. Plays a critical role in the structural stability and function of vacuolar ATPase (v-ATPase). Establishes physical contact with the v-ATPase of endosomes which is critical for proper clathrin localization and is also required for the function of the v-ATPase to lower the pH in phagocytic endosomes thus establishing an antiviral state.</text>
</comment>
<comment type="subunit">
    <text evidence="1 2">Interacts with ATP6V0B (By similarity). Interacts with CD81 (By similarity). Interacts with SPP1; the interaction reduces OPN expression (By similarity). Interacts with BRI3 (By similarity).</text>
</comment>
<comment type="subcellular location">
    <subcellularLocation>
        <location evidence="1">Cell membrane</location>
        <topology evidence="1">Single-pass type II membrane protein</topology>
    </subcellularLocation>
    <subcellularLocation>
        <location evidence="1">Late endosome membrane</location>
        <topology evidence="1">Single-pass type II membrane protein</topology>
    </subcellularLocation>
    <subcellularLocation>
        <location evidence="1">Early endosome membrane</location>
        <topology evidence="1">Single-pass type II membrane protein</topology>
    </subcellularLocation>
    <subcellularLocation>
        <location evidence="1">Lysosome membrane</location>
        <topology evidence="1">Single-pass type II membrane protein</topology>
    </subcellularLocation>
    <subcellularLocation>
        <location evidence="1">Cytoplasm</location>
        <location evidence="1">Perinuclear region</location>
    </subcellularLocation>
    <text evidence="1">Co-localizes with BRI3 isoform 1 at the perinuclear region.</text>
</comment>
<comment type="induction">
    <text evidence="4">By interferon beta.</text>
</comment>
<comment type="PTM">
    <text evidence="1">Polyubiquitinated with both 'Lys-48' and 'Lys-63' linkages. Ubiquitination negatively regulates antiviral activity. Lys-24 is the most prevalent ubiquitination site.</text>
</comment>
<comment type="PTM">
    <text evidence="1">Phosphorylation at Tyr-20 is required for endosomal and lysosomal location.</text>
</comment>
<comment type="similarity">
    <text evidence="5">Belongs to the CD225/Dispanin family.</text>
</comment>
<dbReference type="EMBL" id="X61381">
    <property type="protein sequence ID" value="CAA43655.1"/>
    <property type="molecule type" value="mRNA"/>
</dbReference>
<dbReference type="EMBL" id="BC168774">
    <property type="protein sequence ID" value="AAI68774.1"/>
    <property type="molecule type" value="mRNA"/>
</dbReference>
<dbReference type="EMBL" id="CH473953">
    <property type="protein sequence ID" value="EDM11956.1"/>
    <property type="molecule type" value="Genomic_DNA"/>
</dbReference>
<dbReference type="PIR" id="JC1241">
    <property type="entry name" value="JC1241"/>
</dbReference>
<dbReference type="RefSeq" id="NP_001129596.1">
    <property type="nucleotide sequence ID" value="NM_001136124.1"/>
</dbReference>
<dbReference type="SMR" id="P26376"/>
<dbReference type="BioGRID" id="262866">
    <property type="interactions" value="1"/>
</dbReference>
<dbReference type="FunCoup" id="P26376">
    <property type="interactions" value="370"/>
</dbReference>
<dbReference type="IntAct" id="P26376">
    <property type="interactions" value="1"/>
</dbReference>
<dbReference type="STRING" id="10116.ENSRNOP00000020265"/>
<dbReference type="iPTMnet" id="P26376"/>
<dbReference type="PhosphoSitePlus" id="P26376"/>
<dbReference type="SwissPalm" id="P26376"/>
<dbReference type="PaxDb" id="10116-ENSRNOP00000020265"/>
<dbReference type="Ensembl" id="ENSRNOT00000020265.8">
    <property type="protein sequence ID" value="ENSRNOP00000020265.4"/>
    <property type="gene ID" value="ENSRNOG00000015078.8"/>
</dbReference>
<dbReference type="GeneID" id="361673"/>
<dbReference type="KEGG" id="rno:361673"/>
<dbReference type="AGR" id="RGD:1595844"/>
<dbReference type="CTD" id="10410"/>
<dbReference type="eggNOG" id="ENOG502S9XK">
    <property type="taxonomic scope" value="Eukaryota"/>
</dbReference>
<dbReference type="GeneTree" id="ENSGT00950000182857"/>
<dbReference type="HOGENOM" id="CLU_124511_3_0_1"/>
<dbReference type="InParanoid" id="P26376"/>
<dbReference type="OMA" id="PWPTVIN"/>
<dbReference type="OrthoDB" id="9906841at2759"/>
<dbReference type="PhylomeDB" id="P26376"/>
<dbReference type="TreeFam" id="TF334894"/>
<dbReference type="Reactome" id="R-RNO-198933">
    <property type="pathway name" value="Immunoregulatory interactions between a Lymphoid and a non-Lymphoid cell"/>
</dbReference>
<dbReference type="PRO" id="PR:P26376"/>
<dbReference type="Proteomes" id="UP000002494">
    <property type="component" value="Chromosome 1"/>
</dbReference>
<dbReference type="Proteomes" id="UP000234681">
    <property type="component" value="Chromosome 1"/>
</dbReference>
<dbReference type="Bgee" id="ENSRNOG00000015078">
    <property type="expression patterns" value="Expressed in ovary and 20 other cell types or tissues"/>
</dbReference>
<dbReference type="GO" id="GO:0031901">
    <property type="term" value="C:early endosome membrane"/>
    <property type="evidence" value="ECO:0000250"/>
    <property type="project" value="UniProtKB"/>
</dbReference>
<dbReference type="GO" id="GO:0031902">
    <property type="term" value="C:late endosome membrane"/>
    <property type="evidence" value="ECO:0007669"/>
    <property type="project" value="UniProtKB-SubCell"/>
</dbReference>
<dbReference type="GO" id="GO:0005765">
    <property type="term" value="C:lysosomal membrane"/>
    <property type="evidence" value="ECO:0000250"/>
    <property type="project" value="UniProtKB"/>
</dbReference>
<dbReference type="GO" id="GO:0048471">
    <property type="term" value="C:perinuclear region of cytoplasm"/>
    <property type="evidence" value="ECO:0007669"/>
    <property type="project" value="UniProtKB-SubCell"/>
</dbReference>
<dbReference type="GO" id="GO:0005886">
    <property type="term" value="C:plasma membrane"/>
    <property type="evidence" value="ECO:0000318"/>
    <property type="project" value="GO_Central"/>
</dbReference>
<dbReference type="GO" id="GO:0051607">
    <property type="term" value="P:defense response to virus"/>
    <property type="evidence" value="ECO:0000318"/>
    <property type="project" value="GO_Central"/>
</dbReference>
<dbReference type="GO" id="GO:0046597">
    <property type="term" value="P:host-mediated suppression of symbiont invasion"/>
    <property type="evidence" value="ECO:0000250"/>
    <property type="project" value="UniProtKB"/>
</dbReference>
<dbReference type="GO" id="GO:0045071">
    <property type="term" value="P:negative regulation of viral genome replication"/>
    <property type="evidence" value="ECO:0000318"/>
    <property type="project" value="GO_Central"/>
</dbReference>
<dbReference type="GO" id="GO:0035455">
    <property type="term" value="P:response to interferon-alpha"/>
    <property type="evidence" value="ECO:0000318"/>
    <property type="project" value="GO_Central"/>
</dbReference>
<dbReference type="GO" id="GO:0035456">
    <property type="term" value="P:response to interferon-beta"/>
    <property type="evidence" value="ECO:0000318"/>
    <property type="project" value="GO_Central"/>
</dbReference>
<dbReference type="GO" id="GO:0034341">
    <property type="term" value="P:response to type II interferon"/>
    <property type="evidence" value="ECO:0000318"/>
    <property type="project" value="GO_Central"/>
</dbReference>
<dbReference type="GO" id="GO:0060337">
    <property type="term" value="P:type I interferon-mediated signaling pathway"/>
    <property type="evidence" value="ECO:0000318"/>
    <property type="project" value="GO_Central"/>
</dbReference>
<dbReference type="InterPro" id="IPR007593">
    <property type="entry name" value="CD225/Dispanin_fam"/>
</dbReference>
<dbReference type="InterPro" id="IPR051517">
    <property type="entry name" value="IFITM_antiviral_protein"/>
</dbReference>
<dbReference type="PANTHER" id="PTHR13999">
    <property type="entry name" value="INTERFERON INDUCIBLE TRANSMEMBRANE PROTEIN"/>
    <property type="match status" value="1"/>
</dbReference>
<dbReference type="PANTHER" id="PTHR13999:SF4">
    <property type="entry name" value="INTERFERON-INDUCED TRANSMEMBRANE PROTEIN 3"/>
    <property type="match status" value="1"/>
</dbReference>
<dbReference type="Pfam" id="PF04505">
    <property type="entry name" value="CD225"/>
    <property type="match status" value="1"/>
</dbReference>
<reference key="1">
    <citation type="journal article" date="1992" name="Gene">
        <title>A rat beta-interferon-induced mRNA: sequence characterization.</title>
        <authorList>
            <person name="Hayzer D.J."/>
            <person name="Brinson E."/>
            <person name="Runge M.S."/>
        </authorList>
    </citation>
    <scope>NUCLEOTIDE SEQUENCE [MRNA]</scope>
    <scope>INDUCTION</scope>
</reference>
<reference key="2">
    <citation type="journal article" date="2004" name="Genome Res.">
        <title>The status, quality, and expansion of the NIH full-length cDNA project: the Mammalian Gene Collection (MGC).</title>
        <authorList>
            <consortium name="The MGC Project Team"/>
        </authorList>
    </citation>
    <scope>NUCLEOTIDE SEQUENCE [LARGE SCALE MRNA]</scope>
    <source>
        <tissue>Pituitary</tissue>
    </source>
</reference>
<reference key="3">
    <citation type="submission" date="2005-07" db="EMBL/GenBank/DDBJ databases">
        <authorList>
            <person name="Mural R.J."/>
            <person name="Li P.W."/>
            <person name="Adams M.D."/>
            <person name="Amanatides P.G."/>
            <person name="Baden-Tillson H."/>
            <person name="Barnstead M."/>
            <person name="Chin S.H."/>
            <person name="Dew I."/>
            <person name="Evans C.A."/>
            <person name="Ferriera S."/>
            <person name="Flanigan M."/>
            <person name="Fosler C."/>
            <person name="Glodek A."/>
            <person name="Gu Z."/>
            <person name="Holt R.A."/>
            <person name="Jennings D."/>
            <person name="Kraft C.L."/>
            <person name="Lu F."/>
            <person name="Nguyen T."/>
            <person name="Nusskern D.R."/>
            <person name="Pfannkoch C.M."/>
            <person name="Sitter C."/>
            <person name="Sutton G.G."/>
            <person name="Venter J.C."/>
            <person name="Wang Z."/>
            <person name="Woodage T."/>
            <person name="Zheng X.H."/>
            <person name="Zhong F."/>
        </authorList>
    </citation>
    <scope>NUCLEOTIDE SEQUENCE [LARGE SCALE GENOMIC DNA]</scope>
    <source>
        <strain>Brown Norway</strain>
    </source>
</reference>
<reference key="4">
    <citation type="journal article" date="2012" name="PLoS ONE">
        <title>The dispanins: a novel gene family of ancient origin that contains 14 human members.</title>
        <authorList>
            <person name="Sallman Almen M."/>
            <person name="Bringeland N."/>
            <person name="Fredriksson R."/>
            <person name="Schioth H.B."/>
        </authorList>
    </citation>
    <scope>GENE FAMILY</scope>
</reference>
<keyword id="KW-0051">Antiviral defense</keyword>
<keyword id="KW-1003">Cell membrane</keyword>
<keyword id="KW-0963">Cytoplasm</keyword>
<keyword id="KW-0967">Endosome</keyword>
<keyword id="KW-1017">Isopeptide bond</keyword>
<keyword id="KW-0449">Lipoprotein</keyword>
<keyword id="KW-0458">Lysosome</keyword>
<keyword id="KW-0472">Membrane</keyword>
<keyword id="KW-0564">Palmitate</keyword>
<keyword id="KW-0597">Phosphoprotein</keyword>
<keyword id="KW-1185">Reference proteome</keyword>
<keyword id="KW-0735">Signal-anchor</keyword>
<keyword id="KW-0812">Transmembrane</keyword>
<keyword id="KW-1133">Transmembrane helix</keyword>
<keyword id="KW-0832">Ubl conjugation</keyword>
<protein>
    <recommendedName>
        <fullName evidence="5">Interferon-induced transmembrane protein 3</fullName>
    </recommendedName>
    <alternativeName>
        <fullName>Dispanin subfamily A member 2b</fullName>
        <shortName>DSPA2b</shortName>
    </alternativeName>
</protein>
<gene>
    <name evidence="6" type="primary">ifitm3</name>
</gene>
<organism>
    <name type="scientific">Rattus norvegicus</name>
    <name type="common">Rat</name>
    <dbReference type="NCBI Taxonomy" id="10116"/>
    <lineage>
        <taxon>Eukaryota</taxon>
        <taxon>Metazoa</taxon>
        <taxon>Chordata</taxon>
        <taxon>Craniata</taxon>
        <taxon>Vertebrata</taxon>
        <taxon>Euteleostomi</taxon>
        <taxon>Mammalia</taxon>
        <taxon>Eutheria</taxon>
        <taxon>Euarchontoglires</taxon>
        <taxon>Glires</taxon>
        <taxon>Rodentia</taxon>
        <taxon>Myomorpha</taxon>
        <taxon>Muroidea</taxon>
        <taxon>Muridae</taxon>
        <taxon>Murinae</taxon>
        <taxon>Rattus</taxon>
    </lineage>
</organism>
<evidence type="ECO:0000250" key="1">
    <source>
        <dbReference type="UniProtKB" id="Q01628"/>
    </source>
</evidence>
<evidence type="ECO:0000250" key="2">
    <source>
        <dbReference type="UniProtKB" id="Q9CQW9"/>
    </source>
</evidence>
<evidence type="ECO:0000255" key="3"/>
<evidence type="ECO:0000269" key="4">
    <source>
    </source>
</evidence>
<evidence type="ECO:0000305" key="5"/>
<evidence type="ECO:0000312" key="6">
    <source>
        <dbReference type="EMBL" id="CAA43655.1"/>
    </source>
</evidence>
<accession>P26376</accession>
<accession>B5DER6</accession>
<sequence length="137" mass="14971">MNHTSQAFVNAATGGQPPNYERIKEEYEVSELGAPHGSASVRTTVINMPREVSVPDHVVWSLFNTLFMNFCCLGFIAYAYSVKSRDRKMVGDMTGAQAYASTAKCLNISSLVLSILMVIITIVTVVIIALNAPRLQT</sequence>
<proteinExistence type="evidence at transcript level"/>
<name>IFM3_RAT</name>
<feature type="chain" id="PRO_0000153730" description="Interferon-induced transmembrane protein 3">
    <location>
        <begin position="1"/>
        <end position="137"/>
    </location>
</feature>
<feature type="topological domain" description="Cytoplasmic" evidence="3">
    <location>
        <begin position="1"/>
        <end position="57"/>
    </location>
</feature>
<feature type="intramembrane region" description="Helical" evidence="3">
    <location>
        <begin position="58"/>
        <end position="78"/>
    </location>
</feature>
<feature type="topological domain" description="Cytoplasmic" evidence="3">
    <location>
        <begin position="79"/>
        <end position="109"/>
    </location>
</feature>
<feature type="transmembrane region" description="Helical" evidence="3">
    <location>
        <begin position="110"/>
        <end position="130"/>
    </location>
</feature>
<feature type="topological domain" description="Extracellular" evidence="3">
    <location>
        <begin position="131"/>
        <end position="137"/>
    </location>
</feature>
<feature type="region of interest" description="Interaction with SPP1" evidence="1">
    <location>
        <begin position="60"/>
        <end position="93"/>
    </location>
</feature>
<feature type="region of interest" description="Interaction with VAPA" evidence="1">
    <location>
        <begin position="108"/>
        <end position="133"/>
    </location>
</feature>
<feature type="modified residue" description="Phosphotyrosine" evidence="1">
    <location>
        <position position="20"/>
    </location>
</feature>
<feature type="modified residue" description="Phosphotyrosine" evidence="2">
    <location>
        <position position="27"/>
    </location>
</feature>
<feature type="lipid moiety-binding region" description="S-palmitoyl cysteine" evidence="1">
    <location>
        <position position="71"/>
    </location>
</feature>
<feature type="lipid moiety-binding region" description="S-palmitoyl cysteine" evidence="1">
    <location>
        <position position="72"/>
    </location>
</feature>
<feature type="lipid moiety-binding region" description="S-palmitoyl cysteine" evidence="1">
    <location>
        <position position="105"/>
    </location>
</feature>
<feature type="cross-link" description="Glycyl lysine isopeptide (Lys-Gly) (interchain with G-Cter in ubiquitin)" evidence="1">
    <location>
        <position position="24"/>
    </location>
</feature>
<feature type="cross-link" description="Glycyl lysine isopeptide (Lys-Gly) (interchain with G-Cter in ubiquitin)" evidence="1">
    <location>
        <position position="83"/>
    </location>
</feature>
<feature type="cross-link" description="Glycyl lysine isopeptide (Lys-Gly) (interchain with G-Cter in ubiquitin)" evidence="1">
    <location>
        <position position="88"/>
    </location>
</feature>
<feature type="cross-link" description="Glycyl lysine isopeptide (Lys-Gly) (interchain with G-Cter in ubiquitin)" evidence="1">
    <location>
        <position position="104"/>
    </location>
</feature>